<evidence type="ECO:0000255" key="1">
    <source>
        <dbReference type="HAMAP-Rule" id="MF_00500"/>
    </source>
</evidence>
<evidence type="ECO:0000256" key="2">
    <source>
        <dbReference type="SAM" id="MobiDB-lite"/>
    </source>
</evidence>
<evidence type="ECO:0000305" key="3"/>
<accession>P66513</accession>
<accession>Q9PAS4</accession>
<gene>
    <name evidence="1" type="primary">rpsT</name>
    <name type="ordered locus">PD_1440</name>
</gene>
<organism>
    <name type="scientific">Xylella fastidiosa (strain Temecula1 / ATCC 700964)</name>
    <dbReference type="NCBI Taxonomy" id="183190"/>
    <lineage>
        <taxon>Bacteria</taxon>
        <taxon>Pseudomonadati</taxon>
        <taxon>Pseudomonadota</taxon>
        <taxon>Gammaproteobacteria</taxon>
        <taxon>Lysobacterales</taxon>
        <taxon>Lysobacteraceae</taxon>
        <taxon>Xylella</taxon>
    </lineage>
</organism>
<name>RS20_XYLFT</name>
<reference key="1">
    <citation type="journal article" date="2003" name="J. Bacteriol.">
        <title>Comparative analyses of the complete genome sequences of Pierce's disease and citrus variegated chlorosis strains of Xylella fastidiosa.</title>
        <authorList>
            <person name="Van Sluys M.A."/>
            <person name="de Oliveira M.C."/>
            <person name="Monteiro-Vitorello C.B."/>
            <person name="Miyaki C.Y."/>
            <person name="Furlan L.R."/>
            <person name="Camargo L.E.A."/>
            <person name="da Silva A.C.R."/>
            <person name="Moon D.H."/>
            <person name="Takita M.A."/>
            <person name="Lemos E.G.M."/>
            <person name="Machado M.A."/>
            <person name="Ferro M.I.T."/>
            <person name="da Silva F.R."/>
            <person name="Goldman M.H.S."/>
            <person name="Goldman G.H."/>
            <person name="Lemos M.V.F."/>
            <person name="El-Dorry H."/>
            <person name="Tsai S.M."/>
            <person name="Carrer H."/>
            <person name="Carraro D.M."/>
            <person name="de Oliveira R.C."/>
            <person name="Nunes L.R."/>
            <person name="Siqueira W.J."/>
            <person name="Coutinho L.L."/>
            <person name="Kimura E.T."/>
            <person name="Ferro E.S."/>
            <person name="Harakava R."/>
            <person name="Kuramae E.E."/>
            <person name="Marino C.L."/>
            <person name="Giglioti E."/>
            <person name="Abreu I.L."/>
            <person name="Alves L.M.C."/>
            <person name="do Amaral A.M."/>
            <person name="Baia G.S."/>
            <person name="Blanco S.R."/>
            <person name="Brito M.S."/>
            <person name="Cannavan F.S."/>
            <person name="Celestino A.V."/>
            <person name="da Cunha A.F."/>
            <person name="Fenille R.C."/>
            <person name="Ferro J.A."/>
            <person name="Formighieri E.F."/>
            <person name="Kishi L.T."/>
            <person name="Leoni S.G."/>
            <person name="Oliveira A.R."/>
            <person name="Rosa V.E. Jr."/>
            <person name="Sassaki F.T."/>
            <person name="Sena J.A.D."/>
            <person name="de Souza A.A."/>
            <person name="Truffi D."/>
            <person name="Tsukumo F."/>
            <person name="Yanai G.M."/>
            <person name="Zaros L.G."/>
            <person name="Civerolo E.L."/>
            <person name="Simpson A.J.G."/>
            <person name="Almeida N.F. Jr."/>
            <person name="Setubal J.C."/>
            <person name="Kitajima J.P."/>
        </authorList>
    </citation>
    <scope>NUCLEOTIDE SEQUENCE [LARGE SCALE GENOMIC DNA]</scope>
    <source>
        <strain>Temecula1 / ATCC 700964</strain>
    </source>
</reference>
<dbReference type="EMBL" id="AE009442">
    <property type="protein sequence ID" value="AAO29284.1"/>
    <property type="molecule type" value="Genomic_DNA"/>
</dbReference>
<dbReference type="RefSeq" id="WP_010894866.1">
    <property type="nucleotide sequence ID" value="NC_004556.1"/>
</dbReference>
<dbReference type="SMR" id="P66513"/>
<dbReference type="GeneID" id="93905261"/>
<dbReference type="KEGG" id="xft:PD_1440"/>
<dbReference type="HOGENOM" id="CLU_160655_4_0_6"/>
<dbReference type="Proteomes" id="UP000002516">
    <property type="component" value="Chromosome"/>
</dbReference>
<dbReference type="GO" id="GO:0005829">
    <property type="term" value="C:cytosol"/>
    <property type="evidence" value="ECO:0007669"/>
    <property type="project" value="TreeGrafter"/>
</dbReference>
<dbReference type="GO" id="GO:0015935">
    <property type="term" value="C:small ribosomal subunit"/>
    <property type="evidence" value="ECO:0007669"/>
    <property type="project" value="TreeGrafter"/>
</dbReference>
<dbReference type="GO" id="GO:0070181">
    <property type="term" value="F:small ribosomal subunit rRNA binding"/>
    <property type="evidence" value="ECO:0007669"/>
    <property type="project" value="TreeGrafter"/>
</dbReference>
<dbReference type="GO" id="GO:0003735">
    <property type="term" value="F:structural constituent of ribosome"/>
    <property type="evidence" value="ECO:0007669"/>
    <property type="project" value="InterPro"/>
</dbReference>
<dbReference type="GO" id="GO:0006412">
    <property type="term" value="P:translation"/>
    <property type="evidence" value="ECO:0007669"/>
    <property type="project" value="UniProtKB-UniRule"/>
</dbReference>
<dbReference type="FunFam" id="1.20.58.110:FF:000001">
    <property type="entry name" value="30S ribosomal protein S20"/>
    <property type="match status" value="1"/>
</dbReference>
<dbReference type="Gene3D" id="1.20.58.110">
    <property type="entry name" value="Ribosomal protein S20"/>
    <property type="match status" value="1"/>
</dbReference>
<dbReference type="HAMAP" id="MF_00500">
    <property type="entry name" value="Ribosomal_bS20"/>
    <property type="match status" value="1"/>
</dbReference>
<dbReference type="InterPro" id="IPR002583">
    <property type="entry name" value="Ribosomal_bS20"/>
</dbReference>
<dbReference type="InterPro" id="IPR036510">
    <property type="entry name" value="Ribosomal_bS20_sf"/>
</dbReference>
<dbReference type="NCBIfam" id="TIGR00029">
    <property type="entry name" value="S20"/>
    <property type="match status" value="1"/>
</dbReference>
<dbReference type="PANTHER" id="PTHR33398">
    <property type="entry name" value="30S RIBOSOMAL PROTEIN S20"/>
    <property type="match status" value="1"/>
</dbReference>
<dbReference type="PANTHER" id="PTHR33398:SF1">
    <property type="entry name" value="SMALL RIBOSOMAL SUBUNIT PROTEIN BS20C"/>
    <property type="match status" value="1"/>
</dbReference>
<dbReference type="Pfam" id="PF01649">
    <property type="entry name" value="Ribosomal_S20p"/>
    <property type="match status" value="1"/>
</dbReference>
<dbReference type="SUPFAM" id="SSF46992">
    <property type="entry name" value="Ribosomal protein S20"/>
    <property type="match status" value="1"/>
</dbReference>
<proteinExistence type="inferred from homology"/>
<keyword id="KW-1185">Reference proteome</keyword>
<keyword id="KW-0687">Ribonucleoprotein</keyword>
<keyword id="KW-0689">Ribosomal protein</keyword>
<keyword id="KW-0694">RNA-binding</keyword>
<keyword id="KW-0699">rRNA-binding</keyword>
<sequence length="89" mass="9879">MANIKSAKKRVKQTVVRNERNTAQRSMLRTAVKKVIKALSIKDIAGAETAFAVAQPILDRFSSRGLIHKNKAARHKSRLTARIKALKTA</sequence>
<feature type="chain" id="PRO_0000168067" description="Small ribosomal subunit protein bS20">
    <location>
        <begin position="1"/>
        <end position="89"/>
    </location>
</feature>
<feature type="region of interest" description="Disordered" evidence="2">
    <location>
        <begin position="1"/>
        <end position="20"/>
    </location>
</feature>
<feature type="compositionally biased region" description="Basic residues" evidence="2">
    <location>
        <begin position="1"/>
        <end position="12"/>
    </location>
</feature>
<comment type="function">
    <text evidence="1">Binds directly to 16S ribosomal RNA.</text>
</comment>
<comment type="similarity">
    <text evidence="1">Belongs to the bacterial ribosomal protein bS20 family.</text>
</comment>
<protein>
    <recommendedName>
        <fullName evidence="1">Small ribosomal subunit protein bS20</fullName>
    </recommendedName>
    <alternativeName>
        <fullName evidence="3">30S ribosomal protein S20</fullName>
    </alternativeName>
</protein>